<evidence type="ECO:0000255" key="1">
    <source>
        <dbReference type="HAMAP-Rule" id="MF_01621"/>
    </source>
</evidence>
<evidence type="ECO:0000256" key="2">
    <source>
        <dbReference type="SAM" id="MobiDB-lite"/>
    </source>
</evidence>
<evidence type="ECO:0000269" key="3">
    <source>
    </source>
</evidence>
<evidence type="ECO:0000269" key="4">
    <source>
    </source>
</evidence>
<evidence type="ECO:0000269" key="5">
    <source>
    </source>
</evidence>
<evidence type="ECO:0000269" key="6">
    <source>
    </source>
</evidence>
<evidence type="ECO:0000269" key="7">
    <source>
    </source>
</evidence>
<evidence type="ECO:0000305" key="8"/>
<evidence type="ECO:0007829" key="9">
    <source>
        <dbReference type="PDB" id="6TNM"/>
    </source>
</evidence>
<keyword id="KW-0002">3D-structure</keyword>
<keyword id="KW-0903">Direct protein sequencing</keyword>
<keyword id="KW-0276">Fatty acid metabolism</keyword>
<keyword id="KW-0413">Isomerase</keyword>
<keyword id="KW-0442">Lipid degradation</keyword>
<keyword id="KW-0443">Lipid metabolism</keyword>
<keyword id="KW-0456">Lyase</keyword>
<keyword id="KW-0511">Multifunctional enzyme</keyword>
<keyword id="KW-0520">NAD</keyword>
<keyword id="KW-0560">Oxidoreductase</keyword>
<keyword id="KW-1185">Reference proteome</keyword>
<feature type="chain" id="PRO_0000109268" description="Fatty acid oxidation complex subunit alpha">
    <location>
        <begin position="1"/>
        <end position="729"/>
    </location>
</feature>
<feature type="region of interest" description="Enoyl-CoA hydratase/isomerase" evidence="1">
    <location>
        <begin position="1"/>
        <end position="189"/>
    </location>
</feature>
<feature type="region of interest" description="3-hydroxyacyl-CoA dehydrogenase" evidence="1">
    <location>
        <begin position="311"/>
        <end position="729"/>
    </location>
</feature>
<feature type="region of interest" description="Disordered" evidence="2">
    <location>
        <begin position="708"/>
        <end position="729"/>
    </location>
</feature>
<feature type="active site" description="For 3-hydroxyacyl-CoA dehydrogenase activity" evidence="1 6 7">
    <location>
        <position position="450"/>
    </location>
</feature>
<feature type="binding site" evidence="1">
    <location>
        <position position="296"/>
    </location>
    <ligand>
        <name>substrate</name>
    </ligand>
</feature>
<feature type="binding site" evidence="1 8">
    <location>
        <position position="324"/>
    </location>
    <ligand>
        <name>NAD(+)</name>
        <dbReference type="ChEBI" id="CHEBI:57540"/>
    </ligand>
</feature>
<feature type="binding site" evidence="1">
    <location>
        <position position="343"/>
    </location>
    <ligand>
        <name>NAD(+)</name>
        <dbReference type="ChEBI" id="CHEBI:57540"/>
    </ligand>
</feature>
<feature type="binding site" evidence="1">
    <location>
        <begin position="400"/>
        <end position="402"/>
    </location>
    <ligand>
        <name>NAD(+)</name>
        <dbReference type="ChEBI" id="CHEBI:57540"/>
    </ligand>
</feature>
<feature type="binding site" evidence="1">
    <location>
        <position position="407"/>
    </location>
    <ligand>
        <name>NAD(+)</name>
        <dbReference type="ChEBI" id="CHEBI:57540"/>
    </ligand>
</feature>
<feature type="binding site" evidence="1">
    <location>
        <position position="429"/>
    </location>
    <ligand>
        <name>NAD(+)</name>
        <dbReference type="ChEBI" id="CHEBI:57540"/>
    </ligand>
</feature>
<feature type="binding site" evidence="1">
    <location>
        <position position="453"/>
    </location>
    <ligand>
        <name>NAD(+)</name>
        <dbReference type="ChEBI" id="CHEBI:57540"/>
    </ligand>
</feature>
<feature type="binding site" evidence="1">
    <location>
        <position position="500"/>
    </location>
    <ligand>
        <name>substrate</name>
    </ligand>
</feature>
<feature type="binding site" evidence="1">
    <location>
        <position position="660"/>
    </location>
    <ligand>
        <name>substrate</name>
    </ligand>
</feature>
<feature type="site" description="Important for catalytic activity" evidence="1">
    <location>
        <position position="119"/>
    </location>
</feature>
<feature type="site" description="Important for catalytic activity" evidence="1">
    <location>
        <position position="139"/>
    </location>
</feature>
<feature type="mutagenesis site" description="Absence of both enoyl-CoA hydratase and 3-hydroxyacyl-CoA epimerase activities. Delta(3)-cis-Delta(2)-trans-enoyl-CoA isomerase is only slightly affected." evidence="6">
    <original>G</original>
    <variation>F</variation>
    <location>
        <position position="116"/>
    </location>
</feature>
<feature type="mutagenesis site" description="10-fold increase in KM for NADH." evidence="7">
    <original>G</original>
    <variation>A</variation>
    <location>
        <position position="322"/>
    </location>
</feature>
<feature type="mutagenesis site" description="Almost complete loss of 3-hydroxyacyl-CoA dehydrogenase activity." evidence="7">
    <original>H</original>
    <variation>A</variation>
    <variation>Q</variation>
    <location>
        <position position="450"/>
    </location>
</feature>
<feature type="sequence conflict" description="In Ref. 1; AAA23750." evidence="8" ref="1">
    <original>A</original>
    <variation>R</variation>
    <location>
        <position position="518"/>
    </location>
</feature>
<feature type="sequence conflict" description="In Ref. 3; CAB40809." evidence="8" ref="3">
    <original>F</original>
    <variation>L</variation>
    <location>
        <position position="664"/>
    </location>
</feature>
<feature type="sequence conflict" description="In Ref. 3; CAB40809." evidence="8" ref="3">
    <original>P</original>
    <variation>A</variation>
    <location>
        <position position="666"/>
    </location>
</feature>
<feature type="strand" evidence="9">
    <location>
        <begin position="6"/>
        <end position="13"/>
    </location>
</feature>
<feature type="turn" evidence="9">
    <location>
        <begin position="14"/>
        <end position="16"/>
    </location>
</feature>
<feature type="strand" evidence="9">
    <location>
        <begin position="17"/>
        <end position="22"/>
    </location>
</feature>
<feature type="strand" evidence="9">
    <location>
        <begin position="25"/>
        <end position="28"/>
    </location>
</feature>
<feature type="helix" evidence="9">
    <location>
        <begin position="33"/>
        <end position="46"/>
    </location>
</feature>
<feature type="strand" evidence="9">
    <location>
        <begin position="54"/>
        <end position="65"/>
    </location>
</feature>
<feature type="helix" evidence="9">
    <location>
        <begin position="70"/>
        <end position="72"/>
    </location>
</feature>
<feature type="helix" evidence="9">
    <location>
        <begin position="73"/>
        <end position="76"/>
    </location>
</feature>
<feature type="helix" evidence="9">
    <location>
        <begin position="81"/>
        <end position="99"/>
    </location>
</feature>
<feature type="strand" evidence="9">
    <location>
        <begin position="105"/>
        <end position="109"/>
    </location>
</feature>
<feature type="strand" evidence="9">
    <location>
        <begin position="111"/>
        <end position="114"/>
    </location>
</feature>
<feature type="helix" evidence="9">
    <location>
        <begin position="116"/>
        <end position="123"/>
    </location>
</feature>
<feature type="strand" evidence="9">
    <location>
        <begin position="124"/>
        <end position="129"/>
    </location>
</feature>
<feature type="strand" evidence="9">
    <location>
        <begin position="134"/>
        <end position="136"/>
    </location>
</feature>
<feature type="helix" evidence="9">
    <location>
        <begin position="140"/>
        <end position="142"/>
    </location>
</feature>
<feature type="helix" evidence="9">
    <location>
        <begin position="150"/>
        <end position="158"/>
    </location>
</feature>
<feature type="helix" evidence="9">
    <location>
        <begin position="160"/>
        <end position="169"/>
    </location>
</feature>
<feature type="strand" evidence="9">
    <location>
        <begin position="172"/>
        <end position="174"/>
    </location>
</feature>
<feature type="helix" evidence="9">
    <location>
        <begin position="175"/>
        <end position="181"/>
    </location>
</feature>
<feature type="strand" evidence="9">
    <location>
        <begin position="185"/>
        <end position="187"/>
    </location>
</feature>
<feature type="helix" evidence="9">
    <location>
        <begin position="190"/>
        <end position="205"/>
    </location>
</feature>
<feature type="helix" evidence="9">
    <location>
        <begin position="211"/>
        <end position="215"/>
    </location>
</feature>
<feature type="helix" evidence="9">
    <location>
        <begin position="216"/>
        <end position="219"/>
    </location>
</feature>
<feature type="helix" evidence="9">
    <location>
        <begin position="226"/>
        <end position="241"/>
    </location>
</feature>
<feature type="turn" evidence="9">
    <location>
        <begin position="242"/>
        <end position="244"/>
    </location>
</feature>
<feature type="helix" evidence="9">
    <location>
        <begin position="249"/>
        <end position="260"/>
    </location>
</feature>
<feature type="turn" evidence="9">
    <location>
        <begin position="261"/>
        <end position="263"/>
    </location>
</feature>
<feature type="helix" evidence="9">
    <location>
        <begin position="266"/>
        <end position="282"/>
    </location>
</feature>
<feature type="helix" evidence="9">
    <location>
        <begin position="284"/>
        <end position="306"/>
    </location>
</feature>
<feature type="turn" evidence="9">
    <location>
        <begin position="307"/>
        <end position="309"/>
    </location>
</feature>
<feature type="strand" evidence="9">
    <location>
        <begin position="314"/>
        <end position="319"/>
    </location>
</feature>
<feature type="helix" evidence="9">
    <location>
        <begin position="323"/>
        <end position="333"/>
    </location>
</feature>
<feature type="turn" evidence="9">
    <location>
        <begin position="334"/>
        <end position="336"/>
    </location>
</feature>
<feature type="strand" evidence="9">
    <location>
        <begin position="339"/>
        <end position="342"/>
    </location>
</feature>
<feature type="helix" evidence="9">
    <location>
        <begin position="346"/>
        <end position="365"/>
    </location>
</feature>
<feature type="helix" evidence="9">
    <location>
        <begin position="371"/>
        <end position="378"/>
    </location>
</feature>
<feature type="strand" evidence="9">
    <location>
        <begin position="381"/>
        <end position="386"/>
    </location>
</feature>
<feature type="helix" evidence="9">
    <location>
        <begin position="390"/>
        <end position="392"/>
    </location>
</feature>
<feature type="strand" evidence="9">
    <location>
        <begin position="394"/>
        <end position="398"/>
    </location>
</feature>
<feature type="helix" evidence="9">
    <location>
        <begin position="404"/>
        <end position="416"/>
    </location>
</feature>
<feature type="strand" evidence="9">
    <location>
        <begin position="423"/>
        <end position="426"/>
    </location>
</feature>
<feature type="strand" evidence="9">
    <location>
        <begin position="429"/>
        <end position="431"/>
    </location>
</feature>
<feature type="helix" evidence="9">
    <location>
        <begin position="433"/>
        <end position="436"/>
    </location>
</feature>
<feature type="helix" evidence="9">
    <location>
        <begin position="437"/>
        <end position="439"/>
    </location>
</feature>
<feature type="helix" evidence="9">
    <location>
        <begin position="443"/>
        <end position="445"/>
    </location>
</feature>
<feature type="strand" evidence="9">
    <location>
        <begin position="446"/>
        <end position="450"/>
    </location>
</feature>
<feature type="turn" evidence="9">
    <location>
        <begin position="455"/>
        <end position="457"/>
    </location>
</feature>
<feature type="strand" evidence="9">
    <location>
        <begin position="460"/>
        <end position="465"/>
    </location>
</feature>
<feature type="helix" evidence="9">
    <location>
        <begin position="471"/>
        <end position="483"/>
    </location>
</feature>
<feature type="strand" evidence="9">
    <location>
        <begin position="487"/>
        <end position="492"/>
    </location>
</feature>
<feature type="turn" evidence="9">
    <location>
        <begin position="495"/>
        <end position="498"/>
    </location>
</feature>
<feature type="helix" evidence="9">
    <location>
        <begin position="499"/>
        <end position="515"/>
    </location>
</feature>
<feature type="helix" evidence="9">
    <location>
        <begin position="520"/>
        <end position="529"/>
    </location>
</feature>
<feature type="helix" evidence="9">
    <location>
        <begin position="537"/>
        <end position="544"/>
    </location>
</feature>
<feature type="helix" evidence="9">
    <location>
        <begin position="546"/>
        <end position="559"/>
    </location>
</feature>
<feature type="turn" evidence="9">
    <location>
        <begin position="561"/>
        <end position="563"/>
    </location>
</feature>
<feature type="helix" evidence="9">
    <location>
        <begin position="571"/>
        <end position="577"/>
    </location>
</feature>
<feature type="turn" evidence="9">
    <location>
        <begin position="583"/>
        <end position="586"/>
    </location>
</feature>
<feature type="strand" evidence="9">
    <location>
        <begin position="587"/>
        <end position="593"/>
    </location>
</feature>
<feature type="strand" evidence="9">
    <location>
        <begin position="596"/>
        <end position="598"/>
    </location>
</feature>
<feature type="strand" evidence="9">
    <location>
        <begin position="601"/>
        <end position="603"/>
    </location>
</feature>
<feature type="helix" evidence="9">
    <location>
        <begin position="607"/>
        <end position="615"/>
    </location>
</feature>
<feature type="helix" evidence="9">
    <location>
        <begin position="624"/>
        <end position="644"/>
    </location>
</feature>
<feature type="strand" evidence="9">
    <location>
        <begin position="647"/>
        <end position="649"/>
    </location>
</feature>
<feature type="helix" evidence="9">
    <location>
        <begin position="651"/>
        <end position="661"/>
    </location>
</feature>
<feature type="helix" evidence="9">
    <location>
        <begin position="666"/>
        <end position="668"/>
    </location>
</feature>
<feature type="helix" evidence="9">
    <location>
        <begin position="671"/>
        <end position="677"/>
    </location>
</feature>
<feature type="helix" evidence="9">
    <location>
        <begin position="680"/>
        <end position="688"/>
    </location>
</feature>
<feature type="turn" evidence="9">
    <location>
        <begin position="689"/>
        <end position="692"/>
    </location>
</feature>
<feature type="helix" evidence="9">
    <location>
        <begin position="695"/>
        <end position="697"/>
    </location>
</feature>
<feature type="helix" evidence="9">
    <location>
        <begin position="701"/>
        <end position="706"/>
    </location>
</feature>
<feature type="turn" evidence="9">
    <location>
        <begin position="707"/>
        <end position="710"/>
    </location>
</feature>
<gene>
    <name evidence="1" type="primary">fadB</name>
    <name type="synonym">oldB</name>
    <name type="ordered locus">b3846</name>
    <name type="ordered locus">JW3822</name>
</gene>
<dbReference type="EC" id="4.2.1.17" evidence="1"/>
<dbReference type="EC" id="5.1.2.3" evidence="1"/>
<dbReference type="EC" id="5.3.3.8" evidence="1"/>
<dbReference type="EC" id="1.1.1.35" evidence="1"/>
<dbReference type="EMBL" id="M59368">
    <property type="protein sequence ID" value="AAA23750.1"/>
    <property type="molecule type" value="Genomic_DNA"/>
</dbReference>
<dbReference type="EMBL" id="X52837">
    <property type="protein sequence ID" value="CAB40809.1"/>
    <property type="molecule type" value="Genomic_DNA"/>
</dbReference>
<dbReference type="EMBL" id="M74164">
    <property type="protein sequence ID" value="AAA62777.1"/>
    <property type="molecule type" value="Genomic_DNA"/>
</dbReference>
<dbReference type="EMBL" id="M87049">
    <property type="protein sequence ID" value="AAA67643.1"/>
    <property type="molecule type" value="Genomic_DNA"/>
</dbReference>
<dbReference type="EMBL" id="U00096">
    <property type="protein sequence ID" value="AAC76849.1"/>
    <property type="molecule type" value="Genomic_DNA"/>
</dbReference>
<dbReference type="EMBL" id="AP009048">
    <property type="protein sequence ID" value="BAE77457.1"/>
    <property type="molecule type" value="Genomic_DNA"/>
</dbReference>
<dbReference type="PIR" id="A39592">
    <property type="entry name" value="A39592"/>
</dbReference>
<dbReference type="RefSeq" id="NP_418288.1">
    <property type="nucleotide sequence ID" value="NC_000913.3"/>
</dbReference>
<dbReference type="RefSeq" id="WP_000965936.1">
    <property type="nucleotide sequence ID" value="NZ_SSZK01000046.1"/>
</dbReference>
<dbReference type="PDB" id="6TNM">
    <property type="method" value="X-ray"/>
    <property type="resolution" value="2.95 A"/>
    <property type="chains" value="A=1-729"/>
</dbReference>
<dbReference type="PDBsum" id="6TNM"/>
<dbReference type="SASBDB" id="P21177"/>
<dbReference type="SMR" id="P21177"/>
<dbReference type="BioGRID" id="4263448">
    <property type="interactions" value="165"/>
</dbReference>
<dbReference type="BioGRID" id="852633">
    <property type="interactions" value="1"/>
</dbReference>
<dbReference type="ComplexPortal" id="CPX-3964">
    <property type="entry name" value="fadBA fatty acid oxidation complex, aerobic conditions"/>
</dbReference>
<dbReference type="DIP" id="DIP-9560N"/>
<dbReference type="FunCoup" id="P21177">
    <property type="interactions" value="282"/>
</dbReference>
<dbReference type="IntAct" id="P21177">
    <property type="interactions" value="7"/>
</dbReference>
<dbReference type="STRING" id="511145.b3846"/>
<dbReference type="jPOST" id="P21177"/>
<dbReference type="PaxDb" id="511145-b3846"/>
<dbReference type="EnsemblBacteria" id="AAC76849">
    <property type="protein sequence ID" value="AAC76849"/>
    <property type="gene ID" value="b3846"/>
</dbReference>
<dbReference type="GeneID" id="948336"/>
<dbReference type="KEGG" id="ecj:JW3822"/>
<dbReference type="KEGG" id="eco:b3846"/>
<dbReference type="KEGG" id="ecoc:C3026_20795"/>
<dbReference type="PATRIC" id="fig|511145.12.peg.3960"/>
<dbReference type="EchoBASE" id="EB0275"/>
<dbReference type="eggNOG" id="COG1024">
    <property type="taxonomic scope" value="Bacteria"/>
</dbReference>
<dbReference type="eggNOG" id="COG1250">
    <property type="taxonomic scope" value="Bacteria"/>
</dbReference>
<dbReference type="HOGENOM" id="CLU_009834_16_3_6"/>
<dbReference type="InParanoid" id="P21177"/>
<dbReference type="OMA" id="YNGAAMG"/>
<dbReference type="OrthoDB" id="5389341at2"/>
<dbReference type="PhylomeDB" id="P21177"/>
<dbReference type="BioCyc" id="EcoCyc:FADB-MONOMER"/>
<dbReference type="BioCyc" id="MetaCyc:FADB-MONOMER"/>
<dbReference type="SABIO-RK" id="P21177"/>
<dbReference type="UniPathway" id="UPA00659"/>
<dbReference type="PRO" id="PR:P21177"/>
<dbReference type="Proteomes" id="UP000000625">
    <property type="component" value="Chromosome"/>
</dbReference>
<dbReference type="GO" id="GO:0036125">
    <property type="term" value="C:fatty acid beta-oxidation multienzyme complex"/>
    <property type="evidence" value="ECO:0000314"/>
    <property type="project" value="EcoCyc"/>
</dbReference>
<dbReference type="GO" id="GO:0003857">
    <property type="term" value="F:3-hydroxyacyl-CoA dehydrogenase activity"/>
    <property type="evidence" value="ECO:0000314"/>
    <property type="project" value="UniProtKB"/>
</dbReference>
<dbReference type="GO" id="GO:0008692">
    <property type="term" value="F:3-hydroxybutyryl-CoA epimerase activity"/>
    <property type="evidence" value="ECO:0000314"/>
    <property type="project" value="UniProtKB"/>
</dbReference>
<dbReference type="GO" id="GO:0004165">
    <property type="term" value="F:delta(3)-delta(2)-enoyl-CoA isomerase activity"/>
    <property type="evidence" value="ECO:0000314"/>
    <property type="project" value="UniProtKB"/>
</dbReference>
<dbReference type="GO" id="GO:0004300">
    <property type="term" value="F:enoyl-CoA hydratase activity"/>
    <property type="evidence" value="ECO:0000314"/>
    <property type="project" value="UniProtKB"/>
</dbReference>
<dbReference type="GO" id="GO:0016509">
    <property type="term" value="F:long-chain-3-hydroxyacyl-CoA dehydrogenase activity"/>
    <property type="evidence" value="ECO:0000318"/>
    <property type="project" value="GO_Central"/>
</dbReference>
<dbReference type="GO" id="GO:0070403">
    <property type="term" value="F:NAD+ binding"/>
    <property type="evidence" value="ECO:0007669"/>
    <property type="project" value="InterPro"/>
</dbReference>
<dbReference type="GO" id="GO:0006635">
    <property type="term" value="P:fatty acid beta-oxidation"/>
    <property type="evidence" value="ECO:0000314"/>
    <property type="project" value="ComplexPortal"/>
</dbReference>
<dbReference type="CDD" id="cd06558">
    <property type="entry name" value="crotonase-like"/>
    <property type="match status" value="1"/>
</dbReference>
<dbReference type="FunFam" id="1.10.1040.50:FF:000001">
    <property type="entry name" value="Fatty acid oxidation complex subunit alpha"/>
    <property type="match status" value="1"/>
</dbReference>
<dbReference type="FunFam" id="3.90.226.10:FF:000018">
    <property type="entry name" value="Fatty acid oxidation complex subunit alpha"/>
    <property type="match status" value="1"/>
</dbReference>
<dbReference type="FunFam" id="3.40.50.720:FF:000009">
    <property type="entry name" value="Fatty oxidation complex, alpha subunit"/>
    <property type="match status" value="1"/>
</dbReference>
<dbReference type="Gene3D" id="1.10.1040.50">
    <property type="match status" value="1"/>
</dbReference>
<dbReference type="Gene3D" id="3.90.226.10">
    <property type="entry name" value="2-enoyl-CoA Hydratase, Chain A, domain 1"/>
    <property type="match status" value="1"/>
</dbReference>
<dbReference type="Gene3D" id="3.40.50.720">
    <property type="entry name" value="NAD(P)-binding Rossmann-like Domain"/>
    <property type="match status" value="1"/>
</dbReference>
<dbReference type="HAMAP" id="MF_01621">
    <property type="entry name" value="FadB"/>
    <property type="match status" value="1"/>
</dbReference>
<dbReference type="InterPro" id="IPR006180">
    <property type="entry name" value="3-OHacyl-CoA_DH_CS"/>
</dbReference>
<dbReference type="InterPro" id="IPR006176">
    <property type="entry name" value="3-OHacyl-CoA_DH_NAD-bd"/>
</dbReference>
<dbReference type="InterPro" id="IPR006108">
    <property type="entry name" value="3HC_DH_C"/>
</dbReference>
<dbReference type="InterPro" id="IPR008927">
    <property type="entry name" value="6-PGluconate_DH-like_C_sf"/>
</dbReference>
<dbReference type="InterPro" id="IPR029045">
    <property type="entry name" value="ClpP/crotonase-like_dom_sf"/>
</dbReference>
<dbReference type="InterPro" id="IPR018376">
    <property type="entry name" value="Enoyl-CoA_hyd/isom_CS"/>
</dbReference>
<dbReference type="InterPro" id="IPR001753">
    <property type="entry name" value="Enoyl-CoA_hydra/iso"/>
</dbReference>
<dbReference type="InterPro" id="IPR050136">
    <property type="entry name" value="FA_oxidation_alpha_subunit"/>
</dbReference>
<dbReference type="InterPro" id="IPR012799">
    <property type="entry name" value="FadB"/>
</dbReference>
<dbReference type="InterPro" id="IPR036291">
    <property type="entry name" value="NAD(P)-bd_dom_sf"/>
</dbReference>
<dbReference type="NCBIfam" id="TIGR02437">
    <property type="entry name" value="FadB"/>
    <property type="match status" value="1"/>
</dbReference>
<dbReference type="NCBIfam" id="NF008727">
    <property type="entry name" value="PRK11730.1"/>
    <property type="match status" value="1"/>
</dbReference>
<dbReference type="PANTHER" id="PTHR43612">
    <property type="entry name" value="TRIFUNCTIONAL ENZYME SUBUNIT ALPHA"/>
    <property type="match status" value="1"/>
</dbReference>
<dbReference type="PANTHER" id="PTHR43612:SF3">
    <property type="entry name" value="TRIFUNCTIONAL ENZYME SUBUNIT ALPHA, MITOCHONDRIAL"/>
    <property type="match status" value="1"/>
</dbReference>
<dbReference type="Pfam" id="PF00725">
    <property type="entry name" value="3HCDH"/>
    <property type="match status" value="2"/>
</dbReference>
<dbReference type="Pfam" id="PF02737">
    <property type="entry name" value="3HCDH_N"/>
    <property type="match status" value="1"/>
</dbReference>
<dbReference type="Pfam" id="PF00378">
    <property type="entry name" value="ECH_1"/>
    <property type="match status" value="1"/>
</dbReference>
<dbReference type="SUPFAM" id="SSF48179">
    <property type="entry name" value="6-phosphogluconate dehydrogenase C-terminal domain-like"/>
    <property type="match status" value="2"/>
</dbReference>
<dbReference type="SUPFAM" id="SSF52096">
    <property type="entry name" value="ClpP/crotonase"/>
    <property type="match status" value="1"/>
</dbReference>
<dbReference type="SUPFAM" id="SSF51735">
    <property type="entry name" value="NAD(P)-binding Rossmann-fold domains"/>
    <property type="match status" value="1"/>
</dbReference>
<dbReference type="PROSITE" id="PS00067">
    <property type="entry name" value="3HCDH"/>
    <property type="match status" value="1"/>
</dbReference>
<dbReference type="PROSITE" id="PS00166">
    <property type="entry name" value="ENOYL_COA_HYDRATASE"/>
    <property type="match status" value="1"/>
</dbReference>
<proteinExistence type="evidence at protein level"/>
<comment type="function">
    <text evidence="1 3 4 5 6 7">Involved in the aerobic and anaerobic degradation of long-chain fatty acids via beta-oxidation cycle. Catalyzes the formation of 3-oxoacyl-CoA from enoyl-CoA via L-3-hydroxyacyl-CoA. It can also use D-3-hydroxyacyl-CoA and cis-3-enoyl-CoA as substrate.</text>
</comment>
<comment type="catalytic activity">
    <reaction evidence="1">
        <text>a (3S)-3-hydroxyacyl-CoA + NAD(+) = a 3-oxoacyl-CoA + NADH + H(+)</text>
        <dbReference type="Rhea" id="RHEA:22432"/>
        <dbReference type="ChEBI" id="CHEBI:15378"/>
        <dbReference type="ChEBI" id="CHEBI:57318"/>
        <dbReference type="ChEBI" id="CHEBI:57540"/>
        <dbReference type="ChEBI" id="CHEBI:57945"/>
        <dbReference type="ChEBI" id="CHEBI:90726"/>
        <dbReference type="EC" id="1.1.1.35"/>
    </reaction>
</comment>
<comment type="catalytic activity">
    <reaction evidence="1">
        <text>a (3S)-3-hydroxyacyl-CoA = a (2E)-enoyl-CoA + H2O</text>
        <dbReference type="Rhea" id="RHEA:16105"/>
        <dbReference type="ChEBI" id="CHEBI:15377"/>
        <dbReference type="ChEBI" id="CHEBI:57318"/>
        <dbReference type="ChEBI" id="CHEBI:58856"/>
        <dbReference type="EC" id="4.2.1.17"/>
    </reaction>
</comment>
<comment type="catalytic activity">
    <reaction evidence="1">
        <text>a 4-saturated-(3S)-3-hydroxyacyl-CoA = a (3E)-enoyl-CoA + H2O</text>
        <dbReference type="Rhea" id="RHEA:20724"/>
        <dbReference type="ChEBI" id="CHEBI:15377"/>
        <dbReference type="ChEBI" id="CHEBI:58521"/>
        <dbReference type="ChEBI" id="CHEBI:137480"/>
        <dbReference type="EC" id="4.2.1.17"/>
    </reaction>
</comment>
<comment type="catalytic activity">
    <reaction evidence="1">
        <text>(3S)-3-hydroxybutanoyl-CoA = (3R)-3-hydroxybutanoyl-CoA</text>
        <dbReference type="Rhea" id="RHEA:21760"/>
        <dbReference type="ChEBI" id="CHEBI:57315"/>
        <dbReference type="ChEBI" id="CHEBI:57316"/>
        <dbReference type="EC" id="5.1.2.3"/>
    </reaction>
</comment>
<comment type="catalytic activity">
    <reaction evidence="1">
        <text>a (3Z)-enoyl-CoA = a 4-saturated (2E)-enoyl-CoA</text>
        <dbReference type="Rhea" id="RHEA:45900"/>
        <dbReference type="ChEBI" id="CHEBI:85097"/>
        <dbReference type="ChEBI" id="CHEBI:85489"/>
        <dbReference type="EC" id="5.3.3.8"/>
    </reaction>
</comment>
<comment type="catalytic activity">
    <reaction evidence="1">
        <text>a (3E)-enoyl-CoA = a 4-saturated (2E)-enoyl-CoA</text>
        <dbReference type="Rhea" id="RHEA:45228"/>
        <dbReference type="ChEBI" id="CHEBI:58521"/>
        <dbReference type="ChEBI" id="CHEBI:85097"/>
        <dbReference type="EC" id="5.3.3.8"/>
    </reaction>
</comment>
<comment type="biophysicochemical properties">
    <kinetics>
        <KM evidence="4 6 7">53 uM for crotonyl-CoA (for enoyl-CoA hydratase activity)</KM>
        <KM evidence="4 6 7">8.7 mM for L-3-hydroxy-4-trans-decenoyl-CoA (for enoyl-CoA hydratase activity)</KM>
        <KM evidence="4 6 7">38 mM for D-3-hydroxy-4-trans-decenoyl-CoA (for enoyl-CoA hydratase activity)</KM>
        <KM evidence="4 6 7">5.8 uM for 3-cis-tetradecenoyl-CoA (for Delta(3)-cis-Delta(2)-trans-enoyl-CoA isomerase activity)</KM>
        <KM evidence="4 6 7">69 uM for acetoacetyl-CoA (for 3-hydroxyacyl-CoA dehydrogenase activity)</KM>
        <KM evidence="4 6 7">2 uM for NADH (for 3-hydroxyacyl-CoA dehydrogenase activity)</KM>
    </kinetics>
</comment>
<comment type="pathway">
    <text evidence="1">Lipid metabolism; fatty acid beta-oxidation.</text>
</comment>
<comment type="subunit">
    <text evidence="1 5">Heterotetramer of two alpha chains (FadB) and two beta chains (FadA).</text>
</comment>
<comment type="induction">
    <text>Repressed by FadR in the absence of LCFAs (fatty acids of, at least, 12 carbon atoms). When LCFAs are present in the medium, they are converted to long-chain acyl-CoAs which bind to FadR resulting in its release from the DNA and thus derepression of the transcription.</text>
</comment>
<comment type="similarity">
    <text evidence="1">In the N-terminal section; belongs to the enoyl-CoA hydratase/isomerase family.</text>
</comment>
<comment type="similarity">
    <text evidence="1">In the C-terminal section; belongs to the 3-hydroxyacyl-CoA dehydrogenase family.</text>
</comment>
<protein>
    <recommendedName>
        <fullName evidence="1">Fatty acid oxidation complex subunit alpha</fullName>
    </recommendedName>
    <domain>
        <recommendedName>
            <fullName evidence="1">Enoyl-CoA hydratase/Delta(3)-cis-Delta(2)-trans-enoyl-CoA isomerase/3-hydroxybutyryl-CoA epimerase</fullName>
            <ecNumber evidence="1">4.2.1.17</ecNumber>
            <ecNumber evidence="1">5.1.2.3</ecNumber>
            <ecNumber evidence="1">5.3.3.8</ecNumber>
        </recommendedName>
    </domain>
    <domain>
        <recommendedName>
            <fullName evidence="1">3-hydroxyacyl-CoA dehydrogenase</fullName>
            <ecNumber evidence="1">1.1.1.35</ecNumber>
        </recommendedName>
    </domain>
</protein>
<name>FADB_ECOLI</name>
<organism>
    <name type="scientific">Escherichia coli (strain K12)</name>
    <dbReference type="NCBI Taxonomy" id="83333"/>
    <lineage>
        <taxon>Bacteria</taxon>
        <taxon>Pseudomonadati</taxon>
        <taxon>Pseudomonadota</taxon>
        <taxon>Gammaproteobacteria</taxon>
        <taxon>Enterobacterales</taxon>
        <taxon>Enterobacteriaceae</taxon>
        <taxon>Escherichia</taxon>
    </lineage>
</organism>
<sequence>MLYKGDTLYLDWLEDGIAELVFDAPGSVNKLDTATVASLGEAIGVLEQQSDLKGLLLRSNKAAFIVGADITEFLSLFLVPEEQLSQWLHFANSVFNRLEDLPVPTIAAVNGYALGGGCECVLATDYRLATPDLRIGLPETKLGIMPGFGGSVRMPRMLGADSALEIIAAGKDVGADQALKIGLVDGVVKAEKLVEGAKAVLRQAINGDLDWKAKRQPKLEPLKLSKIEATMSFTIAKGMVAQTAGKHYPAPITAVKTIEAAARFGREEALNLENKSFVPLAHTNEARALVGIFLNDQYVKGKAKKLTKDVETPKQAAVLGAGIMGGGIAYQSAWKGVPVVMKDINDKSLTLGMTEAAKLLNKQLERGKIDGLKLAGVISTIHPTLDYAGFDRVDIVVEAVVENPKVKKAVLAETEQKVRQDTVLASNTSTIPISELANALERPENFCGMHFFNPVHRMPLVEIIRGEKSSDETIAKVVAWASKMGKTPIVVNDCPGFFVNRVLFPYFAGFSQLLRDGADFRKIDKVMEKQFGWPMGPAYLLDVVGIDTAHHAQAVMAAGFPQRMQKDYRDAIDALFDANRFGQKNGLGFWRYKEDSKGKPKKEEDAAVEDLLAEVSQPKRDFSEEEIIARMMIPMVNEVVRCLEEGIIATPAEADMALVYGLGFPPFHGGAFRWLDTLGSAKYLDMAQQYQHLGPLYEVPEGLRNKARHNEPYYPPVEPARPVGDLKTA</sequence>
<reference key="1">
    <citation type="journal article" date="1990" name="J. Bacteriol.">
        <title>Primary sequence of the Escherichia coli fadBA operon, encoding the fatty acid-oxidizing multienzyme complex, indicates a high degree of homology to eucaryotic enzymes.</title>
        <authorList>
            <person name="Dirusso C.C."/>
        </authorList>
    </citation>
    <scope>NUCLEOTIDE SEQUENCE [GENOMIC DNA]</scope>
</reference>
<reference key="2">
    <citation type="journal article" date="1990" name="J. Biol. Chem.">
        <title>Nucleotide sequence of the fadA gene. Primary structure of 3-ketoacyl-coenzyme A thiolase from Escherichia coli and the structural organization of the fadAB operon.</title>
        <authorList>
            <person name="Yang S.-Y."/>
            <person name="Yang X.-Y.H."/>
            <person name="Healy-Louie G."/>
            <person name="Schulz H."/>
            <person name="Elzinga M."/>
        </authorList>
    </citation>
    <scope>NUCLEOTIDE SEQUENCE [GENOMIC DNA]</scope>
    <scope>PROTEIN SEQUENCE OF 1-10</scope>
    <source>
        <strain>K12</strain>
    </source>
</reference>
<reference key="3">
    <citation type="journal article" date="1990" name="Nucleic Acids Res.">
        <title>Nucleotide sequence of the fadA and fadB genes from Escherichia coli.</title>
        <authorList>
            <person name="Nakahigashi K."/>
            <person name="Inokuchi H."/>
        </authorList>
    </citation>
    <scope>NUCLEOTIDE SEQUENCE [GENOMIC DNA]</scope>
    <source>
        <strain>K12 / W3110 / ATCC 27325 / DSM 5911</strain>
    </source>
</reference>
<reference key="4">
    <citation type="journal article" date="1991" name="Biochemistry">
        <title>Nucleotide sequence of the promoter and fadB gene of the fadBA operon and primary structure of the multifunctional fatty acid oxidation protein from Escherichia coli.</title>
        <authorList>
            <person name="Yang X.Y.H."/>
            <person name="Schulz H."/>
            <person name="Elzinga M."/>
            <person name="Yang S.Y."/>
        </authorList>
    </citation>
    <scope>NUCLEOTIDE SEQUENCE [GENOMIC DNA]</scope>
</reference>
<reference key="5">
    <citation type="journal article" date="1992" name="Science">
        <title>Analysis of the Escherichia coli genome: DNA sequence of the region from 84.5 to 86.5 minutes.</title>
        <authorList>
            <person name="Daniels D.L."/>
            <person name="Plunkett G. III"/>
            <person name="Burland V.D."/>
            <person name="Blattner F.R."/>
        </authorList>
    </citation>
    <scope>NUCLEOTIDE SEQUENCE [LARGE SCALE GENOMIC DNA]</scope>
    <source>
        <strain>K12 / MG1655 / ATCC 47076</strain>
    </source>
</reference>
<reference key="6">
    <citation type="journal article" date="1997" name="Science">
        <title>The complete genome sequence of Escherichia coli K-12.</title>
        <authorList>
            <person name="Blattner F.R."/>
            <person name="Plunkett G. III"/>
            <person name="Bloch C.A."/>
            <person name="Perna N.T."/>
            <person name="Burland V."/>
            <person name="Riley M."/>
            <person name="Collado-Vides J."/>
            <person name="Glasner J.D."/>
            <person name="Rode C.K."/>
            <person name="Mayhew G.F."/>
            <person name="Gregor J."/>
            <person name="Davis N.W."/>
            <person name="Kirkpatrick H.A."/>
            <person name="Goeden M.A."/>
            <person name="Rose D.J."/>
            <person name="Mau B."/>
            <person name="Shao Y."/>
        </authorList>
    </citation>
    <scope>NUCLEOTIDE SEQUENCE [LARGE SCALE GENOMIC DNA]</scope>
    <source>
        <strain>K12 / MG1655 / ATCC 47076</strain>
    </source>
</reference>
<reference key="7">
    <citation type="journal article" date="2006" name="Mol. Syst. Biol.">
        <title>Highly accurate genome sequences of Escherichia coli K-12 strains MG1655 and W3110.</title>
        <authorList>
            <person name="Hayashi K."/>
            <person name="Morooka N."/>
            <person name="Yamamoto Y."/>
            <person name="Fujita K."/>
            <person name="Isono K."/>
            <person name="Choi S."/>
            <person name="Ohtsubo E."/>
            <person name="Baba T."/>
            <person name="Wanner B.L."/>
            <person name="Mori H."/>
            <person name="Horiuchi T."/>
        </authorList>
    </citation>
    <scope>NUCLEOTIDE SEQUENCE [LARGE SCALE GENOMIC DNA]</scope>
    <source>
        <strain>K12 / W3110 / ATCC 27325 / DSM 5911</strain>
    </source>
</reference>
<reference key="8">
    <citation type="journal article" date="1979" name="J. Bacteriol.">
        <title>Five different enzymatic activities are associated with the multienzyme complex of fatty acid oxidation from Escherichia coli.</title>
        <authorList>
            <person name="Pramanik A."/>
            <person name="Pawar S."/>
            <person name="Antonian E."/>
            <person name="Schulz H."/>
        </authorList>
    </citation>
    <scope>FUNCTION</scope>
    <scope>SUBUNIT</scope>
</reference>
<reference key="9">
    <citation type="journal article" date="1991" name="J. Biol. Chem.">
        <title>Epimerization of 3-hydroxy-4-trans-decenoyl coenzyme A by a dehydration/hydration mechanism catalyzed by the multienzyme complex of fatty acid oxidation from Escherichia coli.</title>
        <authorList>
            <person name="Smeland T.E."/>
            <person name="Cuebas D."/>
            <person name="Schulz H."/>
        </authorList>
    </citation>
    <scope>FUNCTION AS AN EPIMERASE AND HYDRATASE</scope>
    <scope>CATALYTIC ACTIVITY</scope>
    <scope>BIOPHYSICOCHEMICAL PROPERTIES</scope>
</reference>
<reference key="10">
    <citation type="journal article" date="1993" name="J. Biol. Chem.">
        <title>Association of both enoyl coenzyme A hydratase and 3-hydroxyacyl coenzyme A epimerase with an active site in the amino-terminal domain of the multifunctional fatty acid oxidation protein from Escherichia coli.</title>
        <authorList>
            <person name="Yang S.Y."/>
            <person name="Elzinga M."/>
        </authorList>
    </citation>
    <scope>FUNCTION AS AN EPIMERASE AND HYDRATASE</scope>
    <scope>CATALYTIC ACTIVITY</scope>
    <scope>ACTIVE SITE</scope>
    <scope>MUTAGENESIS OF GLY-116</scope>
    <scope>BIOPHYSICOCHEMICAL PROPERTIES</scope>
</reference>
<reference key="11">
    <citation type="journal article" date="1996" name="Biochemistry">
        <title>Histidine-450 is the catalytic residue of L-3-hydroxyacyl coenzyme A dehydrogenase associated with the large alpha-subunit of the multienzyme complex of fatty acid oxidation from Escherichia coli.</title>
        <authorList>
            <person name="He X.Y."/>
            <person name="Yang S.Y."/>
        </authorList>
    </citation>
    <scope>FUNCTION AS A DEHYDROGENASE</scope>
    <scope>CATALYTIC ACTIVITY</scope>
    <scope>BIOPHYSICOCHEMICAL PROPERTIES</scope>
    <scope>ACTIVE SITE</scope>
    <scope>NAD-BINDING</scope>
    <scope>MUTAGENESIS OF GLY-322 AND HIS-450</scope>
</reference>
<reference key="12">
    <citation type="journal article" date="1997" name="Electrophoresis">
        <title>Escherichia coli proteome analysis using the gene-protein database.</title>
        <authorList>
            <person name="VanBogelen R.A."/>
            <person name="Abshire K.Z."/>
            <person name="Moldover B."/>
            <person name="Olson E.R."/>
            <person name="Neidhardt F.C."/>
        </authorList>
    </citation>
    <scope>IDENTIFICATION BY 2D-GEL</scope>
</reference>
<reference key="13">
    <citation type="journal article" date="2003" name="Mol. Microbiol.">
        <title>A new Escherichia coli metabolic competency: growth on fatty acids by a novel anaerobic beta-oxidation pathway.</title>
        <authorList>
            <person name="Campbell J.W."/>
            <person name="Morgan-Kiss R.M."/>
            <person name="Cronan J.E. Jr."/>
        </authorList>
    </citation>
    <scope>FUNCTION IN ANAEROBIC BETA-OXIDATION PATHWAY</scope>
    <source>
        <strain>K12 / MG1655 / ATCC 47076</strain>
    </source>
</reference>
<accession>P21177</accession>
<accession>Q2M8E9</accession>